<evidence type="ECO:0000255" key="1">
    <source>
        <dbReference type="HAMAP-Rule" id="MF_01656"/>
    </source>
</evidence>
<organism>
    <name type="scientific">Nocardia farcinica (strain IFM 10152)</name>
    <dbReference type="NCBI Taxonomy" id="247156"/>
    <lineage>
        <taxon>Bacteria</taxon>
        <taxon>Bacillati</taxon>
        <taxon>Actinomycetota</taxon>
        <taxon>Actinomycetes</taxon>
        <taxon>Mycobacteriales</taxon>
        <taxon>Nocardiaceae</taxon>
        <taxon>Nocardia</taxon>
    </lineage>
</organism>
<accession>Q5Z2N2</accession>
<feature type="chain" id="PRO_0000387871" description="4-hydroxy-2-oxovalerate aldolase 1">
    <location>
        <begin position="1"/>
        <end position="345"/>
    </location>
</feature>
<feature type="domain" description="Pyruvate carboxyltransferase" evidence="1">
    <location>
        <begin position="9"/>
        <end position="261"/>
    </location>
</feature>
<feature type="active site" description="Proton acceptor" evidence="1">
    <location>
        <position position="21"/>
    </location>
</feature>
<feature type="binding site" evidence="1">
    <location>
        <begin position="17"/>
        <end position="18"/>
    </location>
    <ligand>
        <name>substrate</name>
    </ligand>
</feature>
<feature type="binding site" evidence="1">
    <location>
        <position position="18"/>
    </location>
    <ligand>
        <name>Mn(2+)</name>
        <dbReference type="ChEBI" id="CHEBI:29035"/>
    </ligand>
</feature>
<feature type="binding site" evidence="1">
    <location>
        <position position="171"/>
    </location>
    <ligand>
        <name>substrate</name>
    </ligand>
</feature>
<feature type="binding site" evidence="1">
    <location>
        <position position="200"/>
    </location>
    <ligand>
        <name>Mn(2+)</name>
        <dbReference type="ChEBI" id="CHEBI:29035"/>
    </ligand>
</feature>
<feature type="binding site" evidence="1">
    <location>
        <position position="200"/>
    </location>
    <ligand>
        <name>substrate</name>
    </ligand>
</feature>
<feature type="binding site" evidence="1">
    <location>
        <position position="202"/>
    </location>
    <ligand>
        <name>Mn(2+)</name>
        <dbReference type="ChEBI" id="CHEBI:29035"/>
    </ligand>
</feature>
<feature type="binding site" evidence="1">
    <location>
        <position position="291"/>
    </location>
    <ligand>
        <name>substrate</name>
    </ligand>
</feature>
<feature type="site" description="Transition state stabilizer" evidence="1">
    <location>
        <position position="17"/>
    </location>
</feature>
<proteinExistence type="inferred from homology"/>
<name>HOA1_NOCFA</name>
<gene>
    <name type="ordered locus">NFA_4670</name>
</gene>
<keyword id="KW-0058">Aromatic hydrocarbons catabolism</keyword>
<keyword id="KW-0456">Lyase</keyword>
<keyword id="KW-0464">Manganese</keyword>
<keyword id="KW-0479">Metal-binding</keyword>
<keyword id="KW-1185">Reference proteome</keyword>
<comment type="catalytic activity">
    <reaction evidence="1">
        <text>(S)-4-hydroxy-2-oxopentanoate = acetaldehyde + pyruvate</text>
        <dbReference type="Rhea" id="RHEA:22624"/>
        <dbReference type="ChEBI" id="CHEBI:15343"/>
        <dbReference type="ChEBI" id="CHEBI:15361"/>
        <dbReference type="ChEBI" id="CHEBI:73143"/>
        <dbReference type="EC" id="4.1.3.39"/>
    </reaction>
</comment>
<comment type="similarity">
    <text evidence="1">Belongs to the 4-hydroxy-2-oxovalerate aldolase family.</text>
</comment>
<reference key="1">
    <citation type="journal article" date="2004" name="Proc. Natl. Acad. Sci. U.S.A.">
        <title>The complete genomic sequence of Nocardia farcinica IFM 10152.</title>
        <authorList>
            <person name="Ishikawa J."/>
            <person name="Yamashita A."/>
            <person name="Mikami Y."/>
            <person name="Hoshino Y."/>
            <person name="Kurita H."/>
            <person name="Hotta K."/>
            <person name="Shiba T."/>
            <person name="Hattori M."/>
        </authorList>
    </citation>
    <scope>NUCLEOTIDE SEQUENCE [LARGE SCALE GENOMIC DNA]</scope>
    <source>
        <strain>IFM 10152</strain>
    </source>
</reference>
<dbReference type="EC" id="4.1.3.39" evidence="1"/>
<dbReference type="EMBL" id="AP006618">
    <property type="protein sequence ID" value="BAD55309.1"/>
    <property type="molecule type" value="Genomic_DNA"/>
</dbReference>
<dbReference type="SMR" id="Q5Z2N2"/>
<dbReference type="STRING" id="247156.NFA_4670"/>
<dbReference type="GeneID" id="61131303"/>
<dbReference type="KEGG" id="nfa:NFA_4670"/>
<dbReference type="eggNOG" id="COG0119">
    <property type="taxonomic scope" value="Bacteria"/>
</dbReference>
<dbReference type="HOGENOM" id="CLU_049173_0_0_11"/>
<dbReference type="OrthoDB" id="9803573at2"/>
<dbReference type="Proteomes" id="UP000006820">
    <property type="component" value="Chromosome"/>
</dbReference>
<dbReference type="GO" id="GO:0003852">
    <property type="term" value="F:2-isopropylmalate synthase activity"/>
    <property type="evidence" value="ECO:0007669"/>
    <property type="project" value="TreeGrafter"/>
</dbReference>
<dbReference type="GO" id="GO:0008701">
    <property type="term" value="F:4-hydroxy-2-oxovalerate aldolase activity"/>
    <property type="evidence" value="ECO:0007669"/>
    <property type="project" value="UniProtKB-UniRule"/>
</dbReference>
<dbReference type="GO" id="GO:0030145">
    <property type="term" value="F:manganese ion binding"/>
    <property type="evidence" value="ECO:0007669"/>
    <property type="project" value="UniProtKB-UniRule"/>
</dbReference>
<dbReference type="GO" id="GO:0009056">
    <property type="term" value="P:catabolic process"/>
    <property type="evidence" value="ECO:0007669"/>
    <property type="project" value="UniProtKB-KW"/>
</dbReference>
<dbReference type="GO" id="GO:0009098">
    <property type="term" value="P:L-leucine biosynthetic process"/>
    <property type="evidence" value="ECO:0007669"/>
    <property type="project" value="TreeGrafter"/>
</dbReference>
<dbReference type="CDD" id="cd07943">
    <property type="entry name" value="DRE_TIM_HOA"/>
    <property type="match status" value="1"/>
</dbReference>
<dbReference type="Gene3D" id="1.10.8.60">
    <property type="match status" value="1"/>
</dbReference>
<dbReference type="Gene3D" id="3.20.20.70">
    <property type="entry name" value="Aldolase class I"/>
    <property type="match status" value="1"/>
</dbReference>
<dbReference type="HAMAP" id="MF_01656">
    <property type="entry name" value="HOA"/>
    <property type="match status" value="1"/>
</dbReference>
<dbReference type="InterPro" id="IPR050073">
    <property type="entry name" value="2-IPM_HCS-like"/>
</dbReference>
<dbReference type="InterPro" id="IPR017629">
    <property type="entry name" value="4OH_2_O-val_aldolase"/>
</dbReference>
<dbReference type="InterPro" id="IPR013785">
    <property type="entry name" value="Aldolase_TIM"/>
</dbReference>
<dbReference type="InterPro" id="IPR012425">
    <property type="entry name" value="DmpG_comm"/>
</dbReference>
<dbReference type="InterPro" id="IPR035685">
    <property type="entry name" value="DRE_TIM_HOA"/>
</dbReference>
<dbReference type="InterPro" id="IPR000891">
    <property type="entry name" value="PYR_CT"/>
</dbReference>
<dbReference type="NCBIfam" id="TIGR03217">
    <property type="entry name" value="4OH_2_O_val_ald"/>
    <property type="match status" value="1"/>
</dbReference>
<dbReference type="NCBIfam" id="NF006049">
    <property type="entry name" value="PRK08195.1"/>
    <property type="match status" value="1"/>
</dbReference>
<dbReference type="PANTHER" id="PTHR10277:SF9">
    <property type="entry name" value="2-ISOPROPYLMALATE SYNTHASE 1, CHLOROPLASTIC-RELATED"/>
    <property type="match status" value="1"/>
</dbReference>
<dbReference type="PANTHER" id="PTHR10277">
    <property type="entry name" value="HOMOCITRATE SYNTHASE-RELATED"/>
    <property type="match status" value="1"/>
</dbReference>
<dbReference type="Pfam" id="PF07836">
    <property type="entry name" value="DmpG_comm"/>
    <property type="match status" value="1"/>
</dbReference>
<dbReference type="Pfam" id="PF00682">
    <property type="entry name" value="HMGL-like"/>
    <property type="match status" value="1"/>
</dbReference>
<dbReference type="SUPFAM" id="SSF51569">
    <property type="entry name" value="Aldolase"/>
    <property type="match status" value="1"/>
</dbReference>
<dbReference type="SUPFAM" id="SSF89000">
    <property type="entry name" value="post-HMGL domain-like"/>
    <property type="match status" value="1"/>
</dbReference>
<dbReference type="PROSITE" id="PS50991">
    <property type="entry name" value="PYR_CT"/>
    <property type="match status" value="1"/>
</dbReference>
<sequence length="345" mass="36690">MAYSAELDIRVTDTSLRDGSHHKRHQFTATEVRDIVAALDGAGVPVIEVTHGDGLGGSSFNYGFSKTPEQELVTIAAQTAKQAKIAVLMLPGVGVKEDIKVSQDNGASICRIATHCTEADVSIQHFGLARELGLETVGFLMMSHTQPPEVLAKQARIMADAGCQCVYIVDSAGALVLEQVSDRVAAVVAELGDDAQVGFHGHENLDLAVANSIYAIRAGATQIDGSARRFGAGAGNTPVEALVGVCDKLGIRTGIDFFAIADAAEDVVRPAMPQECLLDRQALMMGYAGVYSSFLKHAERQAERYGVSAAEMLVRAGRRKLVGGQEDQLIDIALELQREQQTATV</sequence>
<protein>
    <recommendedName>
        <fullName evidence="1">4-hydroxy-2-oxovalerate aldolase 1</fullName>
        <shortName evidence="1">HOA 1</shortName>
        <ecNumber evidence="1">4.1.3.39</ecNumber>
    </recommendedName>
    <alternativeName>
        <fullName evidence="1">4-hydroxy-2-keto-pentanoic acid aldolase 1</fullName>
    </alternativeName>
    <alternativeName>
        <fullName evidence="1">4-hydroxy-2-oxopentanoate aldolase 1</fullName>
    </alternativeName>
</protein>